<keyword id="KW-0002">3D-structure</keyword>
<keyword id="KW-0106">Calcium</keyword>
<keyword id="KW-0107">Calcium channel</keyword>
<keyword id="KW-0109">Calcium transport</keyword>
<keyword id="KW-1003">Cell membrane</keyword>
<keyword id="KW-0966">Cell projection</keyword>
<keyword id="KW-0969">Cilium</keyword>
<keyword id="KW-0217">Developmental protein</keyword>
<keyword id="KW-0221">Differentiation</keyword>
<keyword id="KW-0282">Flagellum</keyword>
<keyword id="KW-0407">Ion channel</keyword>
<keyword id="KW-0406">Ion transport</keyword>
<keyword id="KW-0472">Membrane</keyword>
<keyword id="KW-1185">Reference proteome</keyword>
<keyword id="KW-0744">Spermatogenesis</keyword>
<keyword id="KW-0812">Transmembrane</keyword>
<keyword id="KW-1133">Transmembrane helix</keyword>
<keyword id="KW-0813">Transport</keyword>
<keyword id="KW-0851">Voltage-gated channel</keyword>
<accession>A2ARP9</accession>
<accession>A2RSK0</accession>
<accession>Q91ZP5</accession>
<name>CTSR2_MOUSE</name>
<feature type="chain" id="PRO_0000295677" description="Cation channel sperm-associated protein 2">
    <location>
        <begin position="1"/>
        <end position="588"/>
    </location>
</feature>
<feature type="topological domain" description="Cytoplasmic" evidence="11">
    <location>
        <begin position="1"/>
        <end position="106"/>
    </location>
</feature>
<feature type="transmembrane region" description="Helical; Name=Segment S1" evidence="11">
    <location>
        <begin position="107"/>
        <end position="129"/>
    </location>
</feature>
<feature type="topological domain" description="Extracellular" evidence="11">
    <location>
        <begin position="130"/>
        <end position="138"/>
    </location>
</feature>
<feature type="transmembrane region" description="Helical; Name=Segment S2" evidence="11">
    <location>
        <begin position="139"/>
        <end position="164"/>
    </location>
</feature>
<feature type="topological domain" description="Cytoplasmic" evidence="11">
    <location>
        <begin position="165"/>
        <end position="173"/>
    </location>
</feature>
<feature type="transmembrane region" description="Helical; Name=Segment S3" evidence="11">
    <location>
        <begin position="174"/>
        <end position="198"/>
    </location>
</feature>
<feature type="topological domain" description="Extracellular" evidence="11">
    <location>
        <begin position="199"/>
        <end position="201"/>
    </location>
</feature>
<feature type="transmembrane region" description="Helical; Name=Segment S4" evidence="11">
    <location>
        <begin position="202"/>
        <end position="220"/>
    </location>
</feature>
<feature type="topological domain" description="Cytoplasmic" evidence="11">
    <location>
        <begin position="221"/>
        <end position="237"/>
    </location>
</feature>
<feature type="transmembrane region" description="Helical; Name=Segment S5" evidence="11">
    <location>
        <begin position="238"/>
        <end position="260"/>
    </location>
</feature>
<feature type="topological domain" description="Extracellular" evidence="11">
    <location>
        <begin position="261"/>
        <end position="279"/>
    </location>
</feature>
<feature type="intramembrane region" description="Helical; Pore-forming" evidence="11">
    <location>
        <begin position="280"/>
        <end position="292"/>
    </location>
</feature>
<feature type="topological domain" description="Extracellular" evidence="11">
    <location>
        <begin position="293"/>
        <end position="312"/>
    </location>
</feature>
<feature type="transmembrane region" description="Helical; Name=Segment S6" evidence="11">
    <location>
        <begin position="313"/>
        <end position="339"/>
    </location>
</feature>
<feature type="topological domain" description="Cytoplasmic" evidence="11">
    <location>
        <begin position="340"/>
        <end position="588"/>
    </location>
</feature>
<feature type="region of interest" description="Disordered" evidence="3">
    <location>
        <begin position="376"/>
        <end position="512"/>
    </location>
</feature>
<feature type="compositionally biased region" description="Acidic residues" evidence="3">
    <location>
        <begin position="390"/>
        <end position="439"/>
    </location>
</feature>
<feature type="compositionally biased region" description="Basic and acidic residues" evidence="3">
    <location>
        <begin position="440"/>
        <end position="502"/>
    </location>
</feature>
<feature type="sequence conflict" description="In Ref. 1; AAL26489 and 3; AAI32141." evidence="13" ref="1 3">
    <original>S</original>
    <variation>A</variation>
    <location>
        <position position="49"/>
    </location>
</feature>
<feature type="sequence conflict" description="In Ref. 1; AAL26489." evidence="13" ref="1">
    <original>D</original>
    <variation>N</variation>
    <location>
        <position position="303"/>
    </location>
</feature>
<feature type="sequence conflict" description="In Ref. 1; AAL26489." evidence="13" ref="1">
    <original>V</original>
    <variation>I</variation>
    <location>
        <position position="335"/>
    </location>
</feature>
<feature type="sequence conflict" description="In Ref. 1; AAL26489 and 3; AAI32141." evidence="13" ref="1 3">
    <original>N</original>
    <variation>G</variation>
    <location>
        <position position="426"/>
    </location>
</feature>
<feature type="sequence conflict" description="In Ref. 1; AAL26489 and 3; AAI32141." evidence="13" ref="1 3">
    <original>K</original>
    <variation>E</variation>
    <location>
        <position position="482"/>
    </location>
</feature>
<feature type="sequence conflict" description="In Ref. 1; AAL26489 and 3; AAI32141." evidence="13" ref="1 3">
    <original>T</original>
    <variation>I</variation>
    <location>
        <position position="515"/>
    </location>
</feature>
<feature type="helix" evidence="15">
    <location>
        <begin position="96"/>
        <end position="102"/>
    </location>
</feature>
<feature type="helix" evidence="15">
    <location>
        <begin position="106"/>
        <end position="128"/>
    </location>
</feature>
<feature type="helix" evidence="15">
    <location>
        <begin position="138"/>
        <end position="165"/>
    </location>
</feature>
<feature type="helix" evidence="15">
    <location>
        <begin position="169"/>
        <end position="171"/>
    </location>
</feature>
<feature type="helix" evidence="15">
    <location>
        <begin position="174"/>
        <end position="195"/>
    </location>
</feature>
<feature type="helix" evidence="15">
    <location>
        <begin position="202"/>
        <end position="209"/>
    </location>
</feature>
<feature type="helix" evidence="15">
    <location>
        <begin position="210"/>
        <end position="215"/>
    </location>
</feature>
<feature type="helix" evidence="15">
    <location>
        <begin position="216"/>
        <end position="220"/>
    </location>
</feature>
<feature type="helix" evidence="15">
    <location>
        <begin position="225"/>
        <end position="238"/>
    </location>
</feature>
<feature type="helix" evidence="15">
    <location>
        <begin position="240"/>
        <end position="260"/>
    </location>
</feature>
<feature type="turn" evidence="15">
    <location>
        <begin position="263"/>
        <end position="265"/>
    </location>
</feature>
<feature type="helix" evidence="15">
    <location>
        <begin position="281"/>
        <end position="292"/>
    </location>
</feature>
<feature type="helix" evidence="15">
    <location>
        <begin position="297"/>
        <end position="305"/>
    </location>
</feature>
<feature type="strand" evidence="15">
    <location>
        <begin position="307"/>
        <end position="310"/>
    </location>
</feature>
<feature type="turn" evidence="15">
    <location>
        <begin position="312"/>
        <end position="314"/>
    </location>
</feature>
<feature type="helix" evidence="15">
    <location>
        <begin position="315"/>
        <end position="325"/>
    </location>
</feature>
<feature type="turn" evidence="15">
    <location>
        <begin position="326"/>
        <end position="328"/>
    </location>
</feature>
<feature type="helix" evidence="15">
    <location>
        <begin position="329"/>
        <end position="373"/>
    </location>
</feature>
<comment type="function">
    <text evidence="5 6 7 10">Pore-forming subunit of the CatSper complex, a sperm-specific voltage-gated calcium channel that plays a central role in sperm cell hyperactivation. Controls calcium entry to mediate the hyperactivated motility, a step needed for sperm motility which is essential late in the preparation of sperm for fertilization.</text>
</comment>
<comment type="catalytic activity">
    <reaction evidence="14">
        <text>Ca(2+)(in) = Ca(2+)(out)</text>
        <dbReference type="Rhea" id="RHEA:29671"/>
        <dbReference type="ChEBI" id="CHEBI:29108"/>
    </reaction>
</comment>
<comment type="activity regulation">
    <text evidence="2 10">In contrast to the human ortholog, not activated by progesterone (PubMed:21412339). Activated by intracellular alkalinization (By similarity).</text>
</comment>
<comment type="subunit">
    <text evidence="1 2 9 11 12">Component of the CatSper complex or CatSpermasome composed of the core pore-forming members CATSPER1, CATSPER2, CATSPER3 and CATSPER4 as well as auxiliary members CATSPERB, CATSPERG2, CATSPERD, CATSPERE, CATSPERZ, C2CD6/CATSPERT, SLCO6C1, TMEM249, TMEM262 and EFCAB9 (PubMed:21224844, PubMed:34225353, PubMed:34998468). HSPA1 may be an additional auxiliary complex member (By similarity). The core complex members CATSPER1, CATSPER2, CATSPER3 and CATSPER4 form a heterotetrameric channel (PubMed:34225353). The auxiliary CATSPERB, CATSPERG2, CATSPERD and CATSPERE subunits form a pavilion-like structure over the pore which stabilizes the complex through interactions with CATSPER4, CATSPER3, CATSPER1 and CATSPER2 respectively (PubMed:34225353). SLCO6C1 interacts with CATSPERE and TMEM262/CATSPERH interacts with CATSPERB, further stabilizing the complex (PubMed:34225353). C2CD6/CATSPERT interacts at least with CATSPERD and is required for targeting the CatSper complex in the flagellar membrane (PubMed:34998468). Interacts with Ca(v)3.3/CACNA1I, leading to suppression of T-type calcium channel activity (By similarity).</text>
</comment>
<comment type="subcellular location">
    <subcellularLocation>
        <location evidence="4">Cell projection</location>
        <location evidence="4">Cilium</location>
        <location evidence="4">Flagellum membrane</location>
        <topology evidence="11">Multi-pass membrane protein</topology>
    </subcellularLocation>
</comment>
<comment type="tissue specificity">
    <text evidence="4">Testis-specific.</text>
</comment>
<comment type="developmental stage">
    <text evidence="8">Present in testis of 8 day-old. Expressed in pachytene spermatocytes.</text>
</comment>
<comment type="disruption phenotype">
    <text evidence="5">Mice are normal but males are sterile. Male sterility is due to defects in sperm motility unability to fertilize intact eggs. In mice lacking Catsper1, the sperm lacks CatSper2, while in mice lacking CatSper1, the sperm lacks CatSper1, suggesting that stable expression of CatSper1 requires CatSper2 and vice versa.</text>
</comment>
<comment type="similarity">
    <text evidence="13">Belongs to the cation channel sperm-associated (TC 1.A.1.19) family.</text>
</comment>
<comment type="sequence caution" evidence="13">
    <conflict type="erroneous gene model prediction">
        <sequence resource="EMBL-CDS" id="CAM24230"/>
    </conflict>
</comment>
<organism>
    <name type="scientific">Mus musculus</name>
    <name type="common">Mouse</name>
    <dbReference type="NCBI Taxonomy" id="10090"/>
    <lineage>
        <taxon>Eukaryota</taxon>
        <taxon>Metazoa</taxon>
        <taxon>Chordata</taxon>
        <taxon>Craniata</taxon>
        <taxon>Vertebrata</taxon>
        <taxon>Euteleostomi</taxon>
        <taxon>Mammalia</taxon>
        <taxon>Eutheria</taxon>
        <taxon>Euarchontoglires</taxon>
        <taxon>Glires</taxon>
        <taxon>Rodentia</taxon>
        <taxon>Myomorpha</taxon>
        <taxon>Muroidea</taxon>
        <taxon>Muridae</taxon>
        <taxon>Murinae</taxon>
        <taxon>Mus</taxon>
        <taxon>Mus</taxon>
    </lineage>
</organism>
<dbReference type="EMBL" id="AF411816">
    <property type="protein sequence ID" value="AAL26489.1"/>
    <property type="molecule type" value="mRNA"/>
</dbReference>
<dbReference type="EMBL" id="AL845466">
    <property type="protein sequence ID" value="CAM24230.1"/>
    <property type="status" value="ALT_SEQ"/>
    <property type="molecule type" value="Genomic_DNA"/>
</dbReference>
<dbReference type="EMBL" id="BC132140">
    <property type="protein sequence ID" value="AAI32141.1"/>
    <property type="molecule type" value="mRNA"/>
</dbReference>
<dbReference type="PDB" id="7EEB">
    <property type="method" value="EM"/>
    <property type="resolution" value="2.90 A"/>
    <property type="chains" value="B=1-588"/>
</dbReference>
<dbReference type="PDBsum" id="7EEB"/>
<dbReference type="EMDB" id="EMD-31076"/>
<dbReference type="SMR" id="A2ARP9"/>
<dbReference type="ComplexPortal" id="CPX-9078">
    <property type="entry name" value="CatSpermasome complex, gamma subunit variant 2"/>
</dbReference>
<dbReference type="CORUM" id="A2ARP9"/>
<dbReference type="DIP" id="DIP-60801N"/>
<dbReference type="FunCoup" id="A2ARP9">
    <property type="interactions" value="17"/>
</dbReference>
<dbReference type="IntAct" id="A2ARP9">
    <property type="interactions" value="1"/>
</dbReference>
<dbReference type="STRING" id="10090.ENSMUSP00000037222"/>
<dbReference type="GuidetoPHARMACOLOGY" id="389"/>
<dbReference type="PhosphoSitePlus" id="A2ARP9"/>
<dbReference type="PaxDb" id="10090-ENSMUSP00000037222"/>
<dbReference type="ProteomicsDB" id="279207"/>
<dbReference type="AGR" id="MGI:2387404"/>
<dbReference type="MGI" id="MGI:2387404">
    <property type="gene designation" value="Catsper2"/>
</dbReference>
<dbReference type="eggNOG" id="KOG2301">
    <property type="taxonomic scope" value="Eukaryota"/>
</dbReference>
<dbReference type="InParanoid" id="A2ARP9"/>
<dbReference type="PhylomeDB" id="A2ARP9"/>
<dbReference type="TreeFam" id="TF343585"/>
<dbReference type="Reactome" id="R-MMU-1300642">
    <property type="pathway name" value="Sperm Motility And Taxes"/>
</dbReference>
<dbReference type="ChiTaRS" id="Catsper2">
    <property type="organism name" value="mouse"/>
</dbReference>
<dbReference type="PRO" id="PR:A2ARP9"/>
<dbReference type="Proteomes" id="UP000000589">
    <property type="component" value="Unplaced"/>
</dbReference>
<dbReference type="RNAct" id="A2ARP9">
    <property type="molecule type" value="protein"/>
</dbReference>
<dbReference type="GO" id="GO:0036128">
    <property type="term" value="C:CatSper complex"/>
    <property type="evidence" value="ECO:0000314"/>
    <property type="project" value="UniProtKB"/>
</dbReference>
<dbReference type="GO" id="GO:0036126">
    <property type="term" value="C:sperm flagellum"/>
    <property type="evidence" value="ECO:0000314"/>
    <property type="project" value="MGI"/>
</dbReference>
<dbReference type="GO" id="GO:0005227">
    <property type="term" value="F:calcium-activated cation channel activity"/>
    <property type="evidence" value="ECO:0007669"/>
    <property type="project" value="InterPro"/>
</dbReference>
<dbReference type="GO" id="GO:0005245">
    <property type="term" value="F:voltage-gated calcium channel activity"/>
    <property type="evidence" value="ECO:0000314"/>
    <property type="project" value="UniProtKB"/>
</dbReference>
<dbReference type="GO" id="GO:0006816">
    <property type="term" value="P:calcium ion transport"/>
    <property type="evidence" value="ECO:0000314"/>
    <property type="project" value="UniProtKB"/>
</dbReference>
<dbReference type="GO" id="GO:0009566">
    <property type="term" value="P:fertilization"/>
    <property type="evidence" value="ECO:0000315"/>
    <property type="project" value="MGI"/>
</dbReference>
<dbReference type="GO" id="GO:0030317">
    <property type="term" value="P:flagellated sperm motility"/>
    <property type="evidence" value="ECO:0000315"/>
    <property type="project" value="MGI"/>
</dbReference>
<dbReference type="GO" id="GO:0048240">
    <property type="term" value="P:sperm capacitation"/>
    <property type="evidence" value="ECO:0000315"/>
    <property type="project" value="MGI"/>
</dbReference>
<dbReference type="FunFam" id="1.20.120.350:FF:000084">
    <property type="entry name" value="Cation channel sperm associated 2"/>
    <property type="match status" value="1"/>
</dbReference>
<dbReference type="FunFam" id="1.10.287.70:FF:000115">
    <property type="entry name" value="Cation channel sperm-associated protein 2"/>
    <property type="match status" value="1"/>
</dbReference>
<dbReference type="Gene3D" id="1.10.287.70">
    <property type="match status" value="1"/>
</dbReference>
<dbReference type="Gene3D" id="1.20.120.350">
    <property type="entry name" value="Voltage-gated potassium channels. Chain C"/>
    <property type="match status" value="1"/>
</dbReference>
<dbReference type="InterPro" id="IPR028747">
    <property type="entry name" value="CatSper2"/>
</dbReference>
<dbReference type="InterPro" id="IPR005821">
    <property type="entry name" value="Ion_trans_dom"/>
</dbReference>
<dbReference type="InterPro" id="IPR027359">
    <property type="entry name" value="Volt_channel_dom_sf"/>
</dbReference>
<dbReference type="PANTHER" id="PTHR46923">
    <property type="entry name" value="CATION CHANNEL SPERM-ASSOCIATED PROTEIN 2"/>
    <property type="match status" value="1"/>
</dbReference>
<dbReference type="PANTHER" id="PTHR46923:SF1">
    <property type="entry name" value="CATION CHANNEL SPERM-ASSOCIATED PROTEIN 2"/>
    <property type="match status" value="1"/>
</dbReference>
<dbReference type="Pfam" id="PF00520">
    <property type="entry name" value="Ion_trans"/>
    <property type="match status" value="1"/>
</dbReference>
<dbReference type="SUPFAM" id="SSF81324">
    <property type="entry name" value="Voltage-gated potassium channels"/>
    <property type="match status" value="1"/>
</dbReference>
<gene>
    <name type="primary">Catsper2</name>
</gene>
<sequence length="588" mass="68572">MAQEQGHFQLLRADAIRSKLIDTFSLIEHLQGLSQAVPRHTLREILDPSYQQKLMSGDQEQLVRFSIKPRRMGHITHSRRLLSRLRVRCSRMPPLSLWAGWVLDSSVFSKFIISLIFLNTFVLMVEIELMESTNTALWPVKLALEVADWFILLSFIVEILLMWLASFSLFWKDAWNVFDFFVTLLSLLPELVVLLGVPAHSVWLQLLRVCRVLRSLKLFARFRQIKVILLALVRALKSMTFLLMLLLIFFYIFAVTGVYFFREYSRSTIEGLEYNMFFSDLLNSLVTVFILFTLDHWYAVLQDIWKVPESSRVFSSIYVILWLLLGSIIFRNIIVAMMVTNFQNIRSELSEEMSHLEVQYKADMFKQQIIQRRQHSESLRGTSLGKVSEDIIETSDASDDDDDDDDDDDDDDDDDDDKSDATESDNEESDSENSESENSESEKIDPEKDYAKKSYPEKSHPEKSYPEKSHPEKSYPEKSHPKKSYDEQAEAEKVKEESKEKAYPVSHSISSHGSTAADTAFLENLDWETLVHENLPGLMDMDQDDRIVWPRDSLFRYFELLEKLQYNLEERKKLQEFAVQALMSFEDK</sequence>
<evidence type="ECO:0000250" key="1">
    <source>
        <dbReference type="UniProtKB" id="Q91ZR5"/>
    </source>
</evidence>
<evidence type="ECO:0000250" key="2">
    <source>
        <dbReference type="UniProtKB" id="Q96P56"/>
    </source>
</evidence>
<evidence type="ECO:0000256" key="3">
    <source>
        <dbReference type="SAM" id="MobiDB-lite"/>
    </source>
</evidence>
<evidence type="ECO:0000269" key="4">
    <source>
    </source>
</evidence>
<evidence type="ECO:0000269" key="5">
    <source>
    </source>
</evidence>
<evidence type="ECO:0000269" key="6">
    <source>
    </source>
</evidence>
<evidence type="ECO:0000269" key="7">
    <source>
    </source>
</evidence>
<evidence type="ECO:0000269" key="8">
    <source>
    </source>
</evidence>
<evidence type="ECO:0000269" key="9">
    <source>
    </source>
</evidence>
<evidence type="ECO:0000269" key="10">
    <source>
    </source>
</evidence>
<evidence type="ECO:0000269" key="11">
    <source>
    </source>
</evidence>
<evidence type="ECO:0000269" key="12">
    <source>
    </source>
</evidence>
<evidence type="ECO:0000305" key="13"/>
<evidence type="ECO:0000305" key="14">
    <source>
    </source>
</evidence>
<evidence type="ECO:0007829" key="15">
    <source>
        <dbReference type="PDB" id="7EEB"/>
    </source>
</evidence>
<proteinExistence type="evidence at protein level"/>
<reference key="1">
    <citation type="journal article" date="2001" name="Proc. Natl. Acad. Sci. U.S.A.">
        <title>A voltage-gated ion channel expressed specifically in spermatozoa.</title>
        <authorList>
            <person name="Quill T.A."/>
            <person name="Ren D."/>
            <person name="Clapham D.E."/>
            <person name="Garbers D.L."/>
        </authorList>
    </citation>
    <scope>NUCLEOTIDE SEQUENCE [MRNA]</scope>
    <scope>SUBCELLULAR LOCATION</scope>
    <scope>TISSUE SPECIFICITY</scope>
    <source>
        <strain>129/SvEv</strain>
    </source>
</reference>
<reference key="2">
    <citation type="journal article" date="2009" name="PLoS Biol.">
        <title>Lineage-specific biology revealed by a finished genome assembly of the mouse.</title>
        <authorList>
            <person name="Church D.M."/>
            <person name="Goodstadt L."/>
            <person name="Hillier L.W."/>
            <person name="Zody M.C."/>
            <person name="Goldstein S."/>
            <person name="She X."/>
            <person name="Bult C.J."/>
            <person name="Agarwala R."/>
            <person name="Cherry J.L."/>
            <person name="DiCuccio M."/>
            <person name="Hlavina W."/>
            <person name="Kapustin Y."/>
            <person name="Meric P."/>
            <person name="Maglott D."/>
            <person name="Birtle Z."/>
            <person name="Marques A.C."/>
            <person name="Graves T."/>
            <person name="Zhou S."/>
            <person name="Teague B."/>
            <person name="Potamousis K."/>
            <person name="Churas C."/>
            <person name="Place M."/>
            <person name="Herschleb J."/>
            <person name="Runnheim R."/>
            <person name="Forrest D."/>
            <person name="Amos-Landgraf J."/>
            <person name="Schwartz D.C."/>
            <person name="Cheng Z."/>
            <person name="Lindblad-Toh K."/>
            <person name="Eichler E.E."/>
            <person name="Ponting C.P."/>
        </authorList>
    </citation>
    <scope>NUCLEOTIDE SEQUENCE [LARGE SCALE GENOMIC DNA]</scope>
    <source>
        <strain>C57BL/6J</strain>
    </source>
</reference>
<reference key="3">
    <citation type="journal article" date="2004" name="Genome Res.">
        <title>The status, quality, and expansion of the NIH full-length cDNA project: the Mammalian Gene Collection (MGC).</title>
        <authorList>
            <consortium name="The MGC Project Team"/>
        </authorList>
    </citation>
    <scope>NUCLEOTIDE SEQUENCE [LARGE SCALE MRNA]</scope>
    <source>
        <tissue>Brain</tissue>
    </source>
</reference>
<reference key="4">
    <citation type="journal article" date="2003" name="Proc. Natl. Acad. Sci. U.S.A.">
        <title>Hyperactivated sperm motility driven by CatSper2 is required for fertilization.</title>
        <authorList>
            <person name="Quill T.A."/>
            <person name="Sugden S.A."/>
            <person name="Rossi K.L."/>
            <person name="Doolittle L.K."/>
            <person name="Hammer R.E."/>
            <person name="Garbers D.L."/>
        </authorList>
    </citation>
    <scope>FUNCTION</scope>
    <scope>DISRUPTION PHENOTYPE</scope>
</reference>
<reference key="5">
    <citation type="journal article" date="2005" name="J. Biol. Chem.">
        <title>Identical phenotypes of CatSper1 and CatSper2 null sperm.</title>
        <authorList>
            <person name="Carlson A.E."/>
            <person name="Quill T.A."/>
            <person name="Westenbroek R.E."/>
            <person name="Schuh S.M."/>
            <person name="Hille B."/>
            <person name="Babcock D.F."/>
        </authorList>
    </citation>
    <scope>FUNCTION</scope>
    <scope>DISRUPTION PHENOTYPE</scope>
</reference>
<reference key="6">
    <citation type="journal article" date="2007" name="Dev. Biol.">
        <title>Contributions of extracellular and intracellular Ca2+ to regulation of sperm motility: release of intracellular stores can hyperactivate CatSper1 and CatSper2 null sperm.</title>
        <authorList>
            <person name="Marquez B."/>
            <person name="Ignotz G."/>
            <person name="Suarez S.S."/>
        </authorList>
    </citation>
    <scope>FUNCTION</scope>
</reference>
<reference key="7">
    <citation type="journal article" date="2007" name="Mol. Hum. Reprod.">
        <title>Expression of CatSper family transcripts in the mouse testis during post-natal development and human ejaculated spermatozoa: relationship to sperm motility.</title>
        <authorList>
            <person name="Li H.-G."/>
            <person name="Ding X.-F."/>
            <person name="Liao A.-H."/>
            <person name="Kong X.-B."/>
            <person name="Xiong C.-L."/>
        </authorList>
    </citation>
    <scope>DEVELOPMENTAL STAGE</scope>
</reference>
<reference key="8">
    <citation type="journal article" date="2011" name="Nature">
        <title>Progesterone activates the principal Ca2+ channel of human sperm.</title>
        <authorList>
            <person name="Lishko P.V."/>
            <person name="Botchkina I.L."/>
            <person name="Kirichok Y."/>
        </authorList>
    </citation>
    <scope>FUNCTION</scope>
    <scope>TRANSPORTER ACTIVITY</scope>
    <scope>LACK OF ACTIVATION BY PROGESTERONE AND PGE1</scope>
</reference>
<reference key="9">
    <citation type="journal article" date="2011" name="Nat. Commun.">
        <title>A novel gene required for male fertility and functional CATSPER channel formation in spermatozoa.</title>
        <authorList>
            <person name="Chung J.J."/>
            <person name="Navarro B."/>
            <person name="Krapivinsky G."/>
            <person name="Krapivinsky L."/>
            <person name="Clapham D.E."/>
        </authorList>
    </citation>
    <scope>IDENTIFICATION IN THE CATSPER COMPLEX</scope>
    <source>
        <strain>C57BL/6J</strain>
    </source>
</reference>
<reference key="10">
    <citation type="journal article" date="2022" name="Cell Rep.">
        <title>C2cd6-encoded CatSpertau targets sperm calcium channel to Ca2+ signaling domains in the flagellar membrane.</title>
        <authorList>
            <person name="Hwang J.Y."/>
            <person name="Wang H."/>
            <person name="Lu Y."/>
            <person name="Ikawa M."/>
            <person name="Chung J.J."/>
        </authorList>
    </citation>
    <scope>IDENTIFICATION IN THE CATSPER COMPLEX</scope>
</reference>
<reference key="11">
    <citation type="journal article" date="2021" name="Nature">
        <title>Structure of a mammalian sperm cation channel complex.</title>
        <authorList>
            <person name="Lin S."/>
            <person name="Ke M."/>
            <person name="Zhang Y."/>
            <person name="Yan Z."/>
            <person name="Wu J."/>
        </authorList>
    </citation>
    <scope>STRUCTURE BY ELECTRON MICROSCOPY (2.9 ANGSTROMS) OF THE CATSPER COMPLEX</scope>
    <scope>IDENTIFICATION BY MASS SPECTROMETRY</scope>
    <scope>TRANSMEMBRANE DOMAINS</scope>
    <scope>TOPOLOGY</scope>
</reference>
<protein>
    <recommendedName>
        <fullName>Cation channel sperm-associated protein 2</fullName>
        <shortName>CatSper2</shortName>
    </recommendedName>
</protein>